<comment type="function">
    <text evidence="3 4">Inhibitory receptor for the CD200/OX2 cell surface glycoprotein. Limits inflammation by inhibiting the expression of pro-inflammatory molecules including TNF-alpha, interferons, and inducible nitric oxide synthase (iNOS) in response to selected stimuli.</text>
</comment>
<comment type="subunit">
    <text evidence="7">CD200 and CD200R1 interact via their respective N-terminal Ig-like domains.</text>
</comment>
<comment type="interaction">
    <interactant intactId="EBI-16045630">
        <id>Q9ES57</id>
    </interactant>
    <interactant intactId="EBI-8328786">
        <id>O54901</id>
        <label>Cd200</label>
    </interactant>
    <organismsDiffer>false</organismsDiffer>
    <experiments>3</experiments>
</comment>
<comment type="subcellular location">
    <subcellularLocation>
        <location>Cell membrane</location>
        <topology>Single-pass type I membrane protein</topology>
    </subcellularLocation>
</comment>
<comment type="tissue specificity">
    <text evidence="3 4 5 6">Expressed in granulocytes, monocytes, most T-cells and a subset of NK, NKT and B-cells (at protein level). Expressed in the spleen, lung, liver, testis, bone marrow, lymph nodes, spinal cord, kidney, uterus and small intestine. Expressed in mast and dendritic cells. Expressed in the lung of N.brasiliensis-infected mice.</text>
</comment>
<comment type="similarity">
    <text evidence="8">Belongs to the CD200R family.</text>
</comment>
<comment type="caution">
    <text evidence="9 10">May be expressed in adult splenic cells (PubMed:15187158), as the antibody used could not discriminate between CD200R1 and CD200R4. May be expressed in uterus at 12.5 dpc (at protein level) (PubMed:15274657), as the antibody used could not discriminate between CD200R1 and CD200R4.</text>
</comment>
<proteinExistence type="evidence at protein level"/>
<name>MO2R1_MOUSE</name>
<dbReference type="EMBL" id="AF231393">
    <property type="protein sequence ID" value="AAF98556.1"/>
    <property type="molecule type" value="Genomic_DNA"/>
</dbReference>
<dbReference type="EMBL" id="BC052682">
    <property type="protein sequence ID" value="AAH52682.1"/>
    <property type="molecule type" value="mRNA"/>
</dbReference>
<dbReference type="CCDS" id="CCDS28189.1"/>
<dbReference type="RefSeq" id="NP_067300.1">
    <property type="nucleotide sequence ID" value="NM_021325.4"/>
</dbReference>
<dbReference type="PDB" id="4BFG">
    <property type="method" value="X-ray"/>
    <property type="resolution" value="2.08 A"/>
    <property type="chains" value="A=26-228"/>
</dbReference>
<dbReference type="PDB" id="4BFI">
    <property type="method" value="X-ray"/>
    <property type="resolution" value="3.22 A"/>
    <property type="chains" value="A=26-228"/>
</dbReference>
<dbReference type="PDBsum" id="4BFG"/>
<dbReference type="PDBsum" id="4BFI"/>
<dbReference type="SMR" id="Q9ES57"/>
<dbReference type="BioGRID" id="208327">
    <property type="interactions" value="1"/>
</dbReference>
<dbReference type="DIP" id="DIP-60159N"/>
<dbReference type="FunCoup" id="Q9ES57">
    <property type="interactions" value="241"/>
</dbReference>
<dbReference type="IntAct" id="Q9ES57">
    <property type="interactions" value="1"/>
</dbReference>
<dbReference type="STRING" id="10090.ENSMUSP00000053822"/>
<dbReference type="GlyCosmos" id="Q9ES57">
    <property type="glycosylation" value="11 sites, No reported glycans"/>
</dbReference>
<dbReference type="GlyGen" id="Q9ES57">
    <property type="glycosylation" value="11 sites, 2 N-linked glycans (2 sites)"/>
</dbReference>
<dbReference type="iPTMnet" id="Q9ES57"/>
<dbReference type="PhosphoSitePlus" id="Q9ES57"/>
<dbReference type="PaxDb" id="10090-ENSMUSP00000053822"/>
<dbReference type="PeptideAtlas" id="Q9ES57"/>
<dbReference type="ProteomicsDB" id="252583"/>
<dbReference type="DNASU" id="57781"/>
<dbReference type="Ensembl" id="ENSMUST00000057488.15">
    <property type="protein sequence ID" value="ENSMUSP00000053822.9"/>
    <property type="gene ID" value="ENSMUSG00000022667.19"/>
</dbReference>
<dbReference type="GeneID" id="57781"/>
<dbReference type="KEGG" id="mmu:57781"/>
<dbReference type="UCSC" id="uc007zhr.2">
    <property type="organism name" value="mouse"/>
</dbReference>
<dbReference type="AGR" id="MGI:1889024"/>
<dbReference type="CTD" id="131450"/>
<dbReference type="MGI" id="MGI:1889024">
    <property type="gene designation" value="Cd200r1"/>
</dbReference>
<dbReference type="VEuPathDB" id="HostDB:ENSMUSG00000022667"/>
<dbReference type="eggNOG" id="ENOG502S9IV">
    <property type="taxonomic scope" value="Eukaryota"/>
</dbReference>
<dbReference type="GeneTree" id="ENSGT00390000014496"/>
<dbReference type="HOGENOM" id="CLU_069156_0_0_1"/>
<dbReference type="InParanoid" id="Q9ES57"/>
<dbReference type="OMA" id="MKAGTNM"/>
<dbReference type="OrthoDB" id="8915654at2759"/>
<dbReference type="PhylomeDB" id="Q9ES57"/>
<dbReference type="TreeFam" id="TF335960"/>
<dbReference type="BioGRID-ORCS" id="57781">
    <property type="hits" value="1 hit in 75 CRISPR screens"/>
</dbReference>
<dbReference type="EvolutionaryTrace" id="Q9ES57"/>
<dbReference type="PRO" id="PR:Q9ES57"/>
<dbReference type="Proteomes" id="UP000000589">
    <property type="component" value="Chromosome 16"/>
</dbReference>
<dbReference type="RNAct" id="Q9ES57">
    <property type="molecule type" value="protein"/>
</dbReference>
<dbReference type="Bgee" id="ENSMUSG00000022667">
    <property type="expression patterns" value="Expressed in granulocyte and 77 other cell types or tissues"/>
</dbReference>
<dbReference type="ExpressionAtlas" id="Q9ES57">
    <property type="expression patterns" value="baseline and differential"/>
</dbReference>
<dbReference type="GO" id="GO:0009897">
    <property type="term" value="C:external side of plasma membrane"/>
    <property type="evidence" value="ECO:0000314"/>
    <property type="project" value="MGI"/>
</dbReference>
<dbReference type="GO" id="GO:0043235">
    <property type="term" value="C:receptor complex"/>
    <property type="evidence" value="ECO:0000266"/>
    <property type="project" value="MGI"/>
</dbReference>
<dbReference type="GO" id="GO:0038023">
    <property type="term" value="F:signaling receptor activity"/>
    <property type="evidence" value="ECO:0000314"/>
    <property type="project" value="MGI"/>
</dbReference>
<dbReference type="GO" id="GO:0150077">
    <property type="term" value="P:regulation of neuroinflammatory response"/>
    <property type="evidence" value="ECO:0007669"/>
    <property type="project" value="InterPro"/>
</dbReference>
<dbReference type="CDD" id="cd20985">
    <property type="entry name" value="IgV_CD200R-like"/>
    <property type="match status" value="1"/>
</dbReference>
<dbReference type="FunFam" id="2.60.40.10:FF:000584">
    <property type="entry name" value="Cell surface glycoprotein CD200 receptor 1"/>
    <property type="match status" value="1"/>
</dbReference>
<dbReference type="FunFam" id="2.60.40.10:FF:000769">
    <property type="entry name" value="Cell surface glycoprotein CD200 receptor 1"/>
    <property type="match status" value="1"/>
</dbReference>
<dbReference type="Gene3D" id="2.60.40.10">
    <property type="entry name" value="Immunoglobulins"/>
    <property type="match status" value="2"/>
</dbReference>
<dbReference type="InterPro" id="IPR040012">
    <property type="entry name" value="CD200R"/>
</dbReference>
<dbReference type="InterPro" id="IPR013162">
    <property type="entry name" value="CD80_C2-set"/>
</dbReference>
<dbReference type="InterPro" id="IPR007110">
    <property type="entry name" value="Ig-like_dom"/>
</dbReference>
<dbReference type="InterPro" id="IPR036179">
    <property type="entry name" value="Ig-like_dom_sf"/>
</dbReference>
<dbReference type="InterPro" id="IPR013783">
    <property type="entry name" value="Ig-like_fold"/>
</dbReference>
<dbReference type="InterPro" id="IPR003599">
    <property type="entry name" value="Ig_sub"/>
</dbReference>
<dbReference type="InterPro" id="IPR013106">
    <property type="entry name" value="Ig_V-set"/>
</dbReference>
<dbReference type="PANTHER" id="PTHR21462:SF2">
    <property type="entry name" value="CELL SURFACE GLYCOPROTEIN CD200 RECEPTOR 2"/>
    <property type="match status" value="1"/>
</dbReference>
<dbReference type="PANTHER" id="PTHR21462">
    <property type="entry name" value="CELL SURFACE GLYCOPROTEIN OX2 RECEPTOR PRECURSOR"/>
    <property type="match status" value="1"/>
</dbReference>
<dbReference type="Pfam" id="PF08205">
    <property type="entry name" value="C2-set_2"/>
    <property type="match status" value="1"/>
</dbReference>
<dbReference type="Pfam" id="PF07686">
    <property type="entry name" value="V-set"/>
    <property type="match status" value="1"/>
</dbReference>
<dbReference type="SMART" id="SM00409">
    <property type="entry name" value="IG"/>
    <property type="match status" value="1"/>
</dbReference>
<dbReference type="SUPFAM" id="SSF48726">
    <property type="entry name" value="Immunoglobulin"/>
    <property type="match status" value="2"/>
</dbReference>
<dbReference type="PROSITE" id="PS50835">
    <property type="entry name" value="IG_LIKE"/>
    <property type="match status" value="1"/>
</dbReference>
<accession>Q9ES57</accession>
<gene>
    <name type="primary">Cd200r1</name>
    <name type="synonym">Mox2r</name>
    <name type="synonym">Ox2r</name>
</gene>
<protein>
    <recommendedName>
        <fullName>Cell surface glycoprotein CD200 receptor 1</fullName>
    </recommendedName>
    <alternativeName>
        <fullName>CD200 cell surface glycoprotein receptor</fullName>
    </alternativeName>
    <alternativeName>
        <fullName>Cell surface glycoprotein OX2 receptor 1</fullName>
    </alternativeName>
</protein>
<reference key="1">
    <citation type="journal article" date="2000" name="Immunity">
        <title>Lymphoid/neuronal cell surface OX2 glycoprotein recognizes a novel receptor on macrophages implicated in the control of their function.</title>
        <authorList>
            <person name="Wright G.J."/>
            <person name="Puklavec M.J."/>
            <person name="Willis A.C."/>
            <person name="Hoek R.M."/>
            <person name="Sedgwick J.D."/>
            <person name="Brown M.H."/>
            <person name="Barclay A.N."/>
        </authorList>
    </citation>
    <scope>NUCLEOTIDE SEQUENCE [GENOMIC DNA]</scope>
    <source>
        <strain>BALB/cJ</strain>
    </source>
</reference>
<reference key="2">
    <citation type="journal article" date="2004" name="Genome Res.">
        <title>The status, quality, and expansion of the NIH full-length cDNA project: the Mammalian Gene Collection (MGC).</title>
        <authorList>
            <consortium name="The MGC Project Team"/>
        </authorList>
    </citation>
    <scope>NUCLEOTIDE SEQUENCE [LARGE SCALE MRNA]</scope>
    <source>
        <strain>C57BL/6J</strain>
        <tissue>Hematopoietic</tissue>
    </source>
</reference>
<reference key="3">
    <citation type="journal article" date="2003" name="J. Immunol.">
        <title>Characterization of the CD200 receptor family in mice and humans and their interactions with CD200.</title>
        <authorList>
            <person name="Wright G.J."/>
            <person name="Cherwinski H."/>
            <person name="Foster-Cuevas M."/>
            <person name="Brooke G."/>
            <person name="Puklavec M.J."/>
            <person name="Bigler M."/>
            <person name="Song Y."/>
            <person name="Jenmalm M."/>
            <person name="Gorman D."/>
            <person name="McClanahan T."/>
            <person name="Liu M.-R."/>
            <person name="Brown M.H."/>
            <person name="Sedgwick J.D."/>
            <person name="Phillips J.H."/>
            <person name="Barclay A.N."/>
        </authorList>
    </citation>
    <scope>FUNCTION</scope>
    <scope>TISSUE SPECIFICITY</scope>
</reference>
<reference key="4">
    <citation type="journal article" date="2004" name="Am. J. Reprod. Immunol.">
        <title>Structural and functional heterogeneity in the CD200R family of immunoregulatory molecules and their expression at the feto-maternal interface.</title>
        <authorList>
            <person name="Gorczynski R.M."/>
            <person name="Chen Z."/>
            <person name="Clark D.A."/>
            <person name="Kai Y."/>
            <person name="Lee L."/>
            <person name="Nachman J."/>
            <person name="Wong S."/>
            <person name="Marsden P."/>
        </authorList>
    </citation>
    <scope>TISSUE SPECIFICITY</scope>
    <scope>DEVELOPMENTAL STAGE</scope>
</reference>
<reference key="5">
    <citation type="journal article" date="2004" name="J. Biol. Chem.">
        <title>CD200 receptor family members represent novel DAP12-associated activating receptors on basophils and mast cells.</title>
        <authorList>
            <person name="Voehringer D."/>
            <person name="Rosen D.B."/>
            <person name="Lanier L.L."/>
            <person name="Locksley R.M."/>
        </authorList>
    </citation>
    <scope>TISSUE SPECIFICITY</scope>
    <source>
        <strain>BALB/cJ</strain>
    </source>
</reference>
<reference key="6">
    <citation type="journal article" date="2004" name="J. Immunol.">
        <title>CD200 is a ligand for all members of the CD200R family of immunoregulatory molecules.</title>
        <authorList>
            <person name="Gorczynski R."/>
            <person name="Chen Z."/>
            <person name="Kai Y."/>
            <person name="Lee L."/>
            <person name="Wong S."/>
            <person name="Marsden P.A."/>
        </authorList>
    </citation>
    <scope>FUNCTION</scope>
    <scope>TISSUE SPECIFICITY</scope>
    <source>
        <strain>C57BL/6J</strain>
    </source>
</reference>
<reference key="7">
    <citation type="journal article" date="2009" name="Immunity">
        <title>The phagosomal proteome in interferon-gamma-activated macrophages.</title>
        <authorList>
            <person name="Trost M."/>
            <person name="English L."/>
            <person name="Lemieux S."/>
            <person name="Courcelles M."/>
            <person name="Desjardins M."/>
            <person name="Thibault P."/>
        </authorList>
    </citation>
    <scope>IDENTIFICATION BY MASS SPECTROMETRY [LARGE SCALE ANALYSIS]</scope>
</reference>
<reference key="8">
    <citation type="journal article" date="2014" name="Adv. Immunol.">
        <title>The CD200-CD200R1 inhibitory signaling pathway: immune regulation and host-pathogen interactions.</title>
        <authorList>
            <person name="Vaine C.A."/>
            <person name="Soberman R.J."/>
        </authorList>
    </citation>
    <scope>REVIEW</scope>
</reference>
<reference key="9">
    <citation type="journal article" date="2013" name="Structure">
        <title>Structures of CD200/CD200 receptor family and implications for topology, regulation, and evolution.</title>
        <authorList>
            <person name="Hatherley D."/>
            <person name="Lea S.M."/>
            <person name="Johnson S."/>
            <person name="Barclay A.N."/>
        </authorList>
    </citation>
    <scope>X-RAY CRYSTALLOGRAPHY (2.08 ANGSTROMS) OF 26-232 IN COMPLEX WITH CD200</scope>
    <scope>SUBUNIT</scope>
    <scope>DISULFIDE BONDS</scope>
    <scope>GLYCOSYLATION AT ASN-44; ASN-93 AND ASN-192</scope>
    <scope>MUTAGENESIS OF PHE-138</scope>
</reference>
<keyword id="KW-0002">3D-structure</keyword>
<keyword id="KW-1003">Cell membrane</keyword>
<keyword id="KW-1015">Disulfide bond</keyword>
<keyword id="KW-0325">Glycoprotein</keyword>
<keyword id="KW-0472">Membrane</keyword>
<keyword id="KW-0675">Receptor</keyword>
<keyword id="KW-1185">Reference proteome</keyword>
<keyword id="KW-0732">Signal</keyword>
<keyword id="KW-0812">Transmembrane</keyword>
<keyword id="KW-1133">Transmembrane helix</keyword>
<sequence>MFCFWRTSALAVLLIWGVFVAGSSCTDKNQTTQNNSSSPLTQVNTTVSVQIGTKALLCCFSIPLTKAVLITWIIKLRGLPSCTIAYKVDTKTNETSCLGRNITWASTPDHSPELQISAVTLQHEGTYTCETVTPEGNFEKNYDLQVLVPPEVTYFPEKNRSAVCEAMAGKPAAQISWSPDGDCVTTSESHSNGTVTVRSTCHWEQNNVSDVSCIVSHLTGNQSLSIELSRGGNQSLRPYIPYIIPSIIILIIIGCICLLKISGFRKCKLPKLEATSAIEEDEMQPYASYTEKSNPLYDTVTKVEAFPVSQGEVNGTDCLTLSAIGI</sequence>
<organism>
    <name type="scientific">Mus musculus</name>
    <name type="common">Mouse</name>
    <dbReference type="NCBI Taxonomy" id="10090"/>
    <lineage>
        <taxon>Eukaryota</taxon>
        <taxon>Metazoa</taxon>
        <taxon>Chordata</taxon>
        <taxon>Craniata</taxon>
        <taxon>Vertebrata</taxon>
        <taxon>Euteleostomi</taxon>
        <taxon>Mammalia</taxon>
        <taxon>Eutheria</taxon>
        <taxon>Euarchontoglires</taxon>
        <taxon>Glires</taxon>
        <taxon>Rodentia</taxon>
        <taxon>Myomorpha</taxon>
        <taxon>Muroidea</taxon>
        <taxon>Muridae</taxon>
        <taxon>Murinae</taxon>
        <taxon>Mus</taxon>
        <taxon>Mus</taxon>
    </lineage>
</organism>
<feature type="signal peptide" evidence="1">
    <location>
        <begin position="1"/>
        <end position="25"/>
    </location>
</feature>
<feature type="chain" id="PRO_0000015129" description="Cell surface glycoprotein CD200 receptor 1">
    <location>
        <begin position="26"/>
        <end position="326"/>
    </location>
</feature>
<feature type="topological domain" description="Extracellular" evidence="1">
    <location>
        <begin position="26"/>
        <end position="238"/>
    </location>
</feature>
<feature type="transmembrane region" description="Helical" evidence="1">
    <location>
        <begin position="239"/>
        <end position="259"/>
    </location>
</feature>
<feature type="topological domain" description="Cytoplasmic" evidence="1">
    <location>
        <begin position="260"/>
        <end position="326"/>
    </location>
</feature>
<feature type="domain" description="Ig-like V-type">
    <location>
        <begin position="51"/>
        <end position="136"/>
    </location>
</feature>
<feature type="domain" description="Ig-like C2-type">
    <location>
        <begin position="138"/>
        <end position="229"/>
    </location>
</feature>
<feature type="glycosylation site" description="N-linked (GlcNAc...) asparagine" evidence="1">
    <location>
        <position position="29"/>
    </location>
</feature>
<feature type="glycosylation site" description="N-linked (GlcNAc...) asparagine" evidence="1">
    <location>
        <position position="34"/>
    </location>
</feature>
<feature type="glycosylation site" description="N-linked (GlcNAc...) asparagine" evidence="1">
    <location>
        <position position="35"/>
    </location>
</feature>
<feature type="glycosylation site" description="N-linked (GlcNAc...) asparagine" evidence="7">
    <location>
        <position position="44"/>
    </location>
</feature>
<feature type="glycosylation site" description="N-linked (GlcNAc...) asparagine" evidence="7">
    <location>
        <position position="93"/>
    </location>
</feature>
<feature type="glycosylation site" description="N-linked (GlcNAc...) asparagine" evidence="1">
    <location>
        <position position="101"/>
    </location>
</feature>
<feature type="glycosylation site" description="N-linked (GlcNAc...) asparagine" evidence="1">
    <location>
        <position position="159"/>
    </location>
</feature>
<feature type="glycosylation site" description="N-linked (GlcNAc...) asparagine" evidence="7">
    <location>
        <position position="192"/>
    </location>
</feature>
<feature type="glycosylation site" description="N-linked (GlcNAc...) asparagine" evidence="1">
    <location>
        <position position="207"/>
    </location>
</feature>
<feature type="glycosylation site" description="N-linked (GlcNAc...) asparagine" evidence="1">
    <location>
        <position position="221"/>
    </location>
</feature>
<feature type="glycosylation site" description="N-linked (GlcNAc...) asparagine" evidence="1">
    <location>
        <position position="233"/>
    </location>
</feature>
<feature type="disulfide bond" evidence="2 7">
    <location>
        <begin position="58"/>
        <end position="129"/>
    </location>
</feature>
<feature type="disulfide bond" evidence="2 7">
    <location>
        <begin position="82"/>
        <end position="97"/>
    </location>
</feature>
<feature type="disulfide bond" evidence="2 7">
    <location>
        <begin position="164"/>
        <end position="213"/>
    </location>
</feature>
<feature type="disulfide bond" evidence="2 7">
    <location>
        <begin position="183"/>
        <end position="201"/>
    </location>
</feature>
<feature type="mutagenesis site" description="7-fold reduction in binding to CD200." evidence="7">
    <original>F</original>
    <variation>L</variation>
    <location>
        <position position="138"/>
    </location>
</feature>
<feature type="strand" evidence="11">
    <location>
        <begin position="41"/>
        <end position="50"/>
    </location>
</feature>
<feature type="strand" evidence="11">
    <location>
        <begin position="55"/>
        <end position="57"/>
    </location>
</feature>
<feature type="strand" evidence="11">
    <location>
        <begin position="59"/>
        <end position="62"/>
    </location>
</feature>
<feature type="turn" evidence="12">
    <location>
        <begin position="64"/>
        <end position="66"/>
    </location>
</feature>
<feature type="strand" evidence="11">
    <location>
        <begin position="68"/>
        <end position="76"/>
    </location>
</feature>
<feature type="strand" evidence="11">
    <location>
        <begin position="82"/>
        <end position="87"/>
    </location>
</feature>
<feature type="turn" evidence="11">
    <location>
        <begin position="88"/>
        <end position="91"/>
    </location>
</feature>
<feature type="strand" evidence="11">
    <location>
        <begin position="92"/>
        <end position="95"/>
    </location>
</feature>
<feature type="turn" evidence="11">
    <location>
        <begin position="98"/>
        <end position="101"/>
    </location>
</feature>
<feature type="strand" evidence="11">
    <location>
        <begin position="102"/>
        <end position="104"/>
    </location>
</feature>
<feature type="strand" evidence="11">
    <location>
        <begin position="114"/>
        <end position="118"/>
    </location>
</feature>
<feature type="helix" evidence="11">
    <location>
        <begin position="121"/>
        <end position="123"/>
    </location>
</feature>
<feature type="strand" evidence="11">
    <location>
        <begin position="125"/>
        <end position="133"/>
    </location>
</feature>
<feature type="strand" evidence="11">
    <location>
        <begin position="136"/>
        <end position="148"/>
    </location>
</feature>
<feature type="strand" evidence="11">
    <location>
        <begin position="151"/>
        <end position="157"/>
    </location>
</feature>
<feature type="turn" evidence="11">
    <location>
        <begin position="158"/>
        <end position="160"/>
    </location>
</feature>
<feature type="strand" evidence="11">
    <location>
        <begin position="161"/>
        <end position="171"/>
    </location>
</feature>
<feature type="strand" evidence="11">
    <location>
        <begin position="174"/>
        <end position="179"/>
    </location>
</feature>
<feature type="strand" evidence="11">
    <location>
        <begin position="182"/>
        <end position="189"/>
    </location>
</feature>
<feature type="strand" evidence="11">
    <location>
        <begin position="195"/>
        <end position="202"/>
    </location>
</feature>
<feature type="strand" evidence="12">
    <location>
        <begin position="205"/>
        <end position="207"/>
    </location>
</feature>
<feature type="strand" evidence="11">
    <location>
        <begin position="210"/>
        <end position="216"/>
    </location>
</feature>
<feature type="strand" evidence="11">
    <location>
        <begin position="222"/>
        <end position="227"/>
    </location>
</feature>
<evidence type="ECO:0000255" key="1"/>
<evidence type="ECO:0000255" key="2">
    <source>
        <dbReference type="PROSITE-ProRule" id="PRU00114"/>
    </source>
</evidence>
<evidence type="ECO:0000269" key="3">
    <source>
    </source>
</evidence>
<evidence type="ECO:0000269" key="4">
    <source>
    </source>
</evidence>
<evidence type="ECO:0000269" key="5">
    <source>
    </source>
</evidence>
<evidence type="ECO:0000269" key="6">
    <source>
    </source>
</evidence>
<evidence type="ECO:0000269" key="7">
    <source>
    </source>
</evidence>
<evidence type="ECO:0000305" key="8"/>
<evidence type="ECO:0000305" key="9">
    <source>
    </source>
</evidence>
<evidence type="ECO:0000305" key="10">
    <source>
    </source>
</evidence>
<evidence type="ECO:0007829" key="11">
    <source>
        <dbReference type="PDB" id="4BFG"/>
    </source>
</evidence>
<evidence type="ECO:0007829" key="12">
    <source>
        <dbReference type="PDB" id="4BFI"/>
    </source>
</evidence>